<feature type="chain" id="PRO_0000349375" description="Bifunctional peptidase and (3S)-lysyl hydroxylase Jmjd7">
    <location>
        <begin position="1"/>
        <end position="316"/>
    </location>
</feature>
<feature type="domain" description="JmjC" evidence="2">
    <location>
        <begin position="128"/>
        <end position="307"/>
    </location>
</feature>
<feature type="binding site" evidence="2">
    <location>
        <position position="178"/>
    </location>
    <ligand>
        <name>Fe cation</name>
        <dbReference type="ChEBI" id="CHEBI:24875"/>
        <note>catalytic</note>
    </ligand>
</feature>
<feature type="binding site" evidence="2">
    <location>
        <position position="180"/>
    </location>
    <ligand>
        <name>Fe cation</name>
        <dbReference type="ChEBI" id="CHEBI:24875"/>
        <note>catalytic</note>
    </ligand>
</feature>
<feature type="binding site" evidence="2">
    <location>
        <position position="277"/>
    </location>
    <ligand>
        <name>Fe cation</name>
        <dbReference type="ChEBI" id="CHEBI:24875"/>
        <note>catalytic</note>
    </ligand>
</feature>
<feature type="disulfide bond" description="Interchain" evidence="1">
    <location>
        <position position="47"/>
    </location>
</feature>
<feature type="helix" evidence="7">
    <location>
        <begin position="1"/>
        <end position="23"/>
    </location>
</feature>
<feature type="strand" evidence="7">
    <location>
        <begin position="31"/>
        <end position="34"/>
    </location>
</feature>
<feature type="helix" evidence="7">
    <location>
        <begin position="38"/>
        <end position="44"/>
    </location>
</feature>
<feature type="turn" evidence="7">
    <location>
        <begin position="45"/>
        <end position="49"/>
    </location>
</feature>
<feature type="strand" evidence="7">
    <location>
        <begin position="52"/>
        <end position="56"/>
    </location>
</feature>
<feature type="helix" evidence="7">
    <location>
        <begin position="63"/>
        <end position="66"/>
    </location>
</feature>
<feature type="helix" evidence="7">
    <location>
        <begin position="69"/>
        <end position="76"/>
    </location>
</feature>
<feature type="strand" evidence="7">
    <location>
        <begin position="79"/>
        <end position="89"/>
    </location>
</feature>
<feature type="strand" evidence="7">
    <location>
        <begin position="92"/>
        <end position="95"/>
    </location>
</feature>
<feature type="strand" evidence="7">
    <location>
        <begin position="98"/>
        <end position="101"/>
    </location>
</feature>
<feature type="strand" evidence="7">
    <location>
        <begin position="103"/>
        <end position="108"/>
    </location>
</feature>
<feature type="helix" evidence="7">
    <location>
        <begin position="109"/>
        <end position="117"/>
    </location>
</feature>
<feature type="strand" evidence="7">
    <location>
        <begin position="118"/>
        <end position="120"/>
    </location>
</feature>
<feature type="strand" evidence="7">
    <location>
        <begin position="123"/>
        <end position="128"/>
    </location>
</feature>
<feature type="turn" evidence="7">
    <location>
        <begin position="131"/>
        <end position="133"/>
    </location>
</feature>
<feature type="helix" evidence="7">
    <location>
        <begin position="134"/>
        <end position="138"/>
    </location>
</feature>
<feature type="helix" evidence="7">
    <location>
        <begin position="140"/>
        <end position="145"/>
    </location>
</feature>
<feature type="helix" evidence="7">
    <location>
        <begin position="151"/>
        <end position="157"/>
    </location>
</feature>
<feature type="strand" evidence="7">
    <location>
        <begin position="162"/>
        <end position="169"/>
    </location>
</feature>
<feature type="strand" evidence="7">
    <location>
        <begin position="175"/>
        <end position="178"/>
    </location>
</feature>
<feature type="strand" evidence="7">
    <location>
        <begin position="181"/>
        <end position="191"/>
    </location>
</feature>
<feature type="strand" evidence="7">
    <location>
        <begin position="193"/>
        <end position="198"/>
    </location>
</feature>
<feature type="helix" evidence="7">
    <location>
        <begin position="200"/>
        <end position="205"/>
    </location>
</feature>
<feature type="strand" evidence="7">
    <location>
        <begin position="209"/>
        <end position="218"/>
    </location>
</feature>
<feature type="strand" evidence="7">
    <location>
        <begin position="224"/>
        <end position="228"/>
    </location>
</feature>
<feature type="strand" evidence="7">
    <location>
        <begin position="235"/>
        <end position="237"/>
    </location>
</feature>
<feature type="strand" evidence="7">
    <location>
        <begin position="242"/>
        <end position="244"/>
    </location>
</feature>
<feature type="turn" evidence="7">
    <location>
        <begin position="247"/>
        <end position="249"/>
    </location>
</feature>
<feature type="helix" evidence="7">
    <location>
        <begin position="251"/>
        <end position="255"/>
    </location>
</feature>
<feature type="strand" evidence="7">
    <location>
        <begin position="259"/>
        <end position="263"/>
    </location>
</feature>
<feature type="strand" evidence="7">
    <location>
        <begin position="267"/>
        <end position="271"/>
    </location>
</feature>
<feature type="strand" evidence="7">
    <location>
        <begin position="276"/>
        <end position="281"/>
    </location>
</feature>
<feature type="strand" evidence="7">
    <location>
        <begin position="285"/>
        <end position="293"/>
    </location>
</feature>
<feature type="helix" evidence="7">
    <location>
        <begin position="298"/>
        <end position="312"/>
    </location>
</feature>
<sequence length="316" mass="35917">MAEAALEAVRRALQEFPAAARDLNVPRVVPYLDEPPSPLCFYRDWVCPNRPCIIRNALQHWPALQKWSLSYLRATVGSTEVSVAVTPDGYADAVRGDRFVMPAERRLPISHVLDVLEGRAQHPGVLYVQKQCSNLPTELPQLLSDIESHVPWASESLGKMPDAVNFWLGDASAVTSLHKDHYENLYCVVSGEKHFLLHPPSDRPFIPYNLYTPATYQLTEEGTFRVVDEEAMEKVPWIPLDPLAPDLTQYPSYSQAQALHCTVRAGEMLYLPALWFHHVQQSHGCIAVNFWYDMEYDLKYSYFQLMDTLTRATGLD</sequence>
<organism>
    <name type="scientific">Mus musculus</name>
    <name type="common">Mouse</name>
    <dbReference type="NCBI Taxonomy" id="10090"/>
    <lineage>
        <taxon>Eukaryota</taxon>
        <taxon>Metazoa</taxon>
        <taxon>Chordata</taxon>
        <taxon>Craniata</taxon>
        <taxon>Vertebrata</taxon>
        <taxon>Euteleostomi</taxon>
        <taxon>Mammalia</taxon>
        <taxon>Eutheria</taxon>
        <taxon>Euarchontoglires</taxon>
        <taxon>Glires</taxon>
        <taxon>Rodentia</taxon>
        <taxon>Myomorpha</taxon>
        <taxon>Muroidea</taxon>
        <taxon>Muridae</taxon>
        <taxon>Murinae</taxon>
        <taxon>Mus</taxon>
        <taxon>Mus</taxon>
    </lineage>
</organism>
<name>JMJD7_MOUSE</name>
<gene>
    <name evidence="4 6" type="primary">Jmjd7</name>
</gene>
<keyword id="KW-0002">3D-structure</keyword>
<keyword id="KW-0031">Aminopeptidase</keyword>
<keyword id="KW-0963">Cytoplasm</keyword>
<keyword id="KW-1015">Disulfide bond</keyword>
<keyword id="KW-0378">Hydrolase</keyword>
<keyword id="KW-0408">Iron</keyword>
<keyword id="KW-0479">Metal-binding</keyword>
<keyword id="KW-0503">Monooxygenase</keyword>
<keyword id="KW-0539">Nucleus</keyword>
<keyword id="KW-0560">Oxidoreductase</keyword>
<keyword id="KW-0645">Protease</keyword>
<keyword id="KW-1185">Reference proteome</keyword>
<comment type="function">
    <text evidence="1 3">Bifunctional enzyme that acts both as an endopeptidase and 2-oxoglutarate-dependent monooxygenase (By similarity) (PubMed:28847961). Endopeptidase that cleaves histones N-terminal tails at the carboxyl side of methylated arginine or lysine residues, to generate 'tailless nucleosomes', which may trigger transcription elongation (PubMed:28847961). Preferentially recognizes and cleaves monomethylated and dimethylated arginine residues of histones H2, H3 and H4. After initial cleavage, continues to digest histones tails via its aminopeptidase activity (PubMed:28847961). Additionally, may play a role in protein biosynthesis by modifying the translation machinery. Acts as a Fe(2+) and 2-oxoglutarate-dependent monooxygenase, catalyzing (S)-stereospecific hydroxylation at C-3 of 'Lys-22' of DRG1 and 'Lys-21' of DRG2 translation factors (TRAFAC), promoting their interaction with ribonucleic acids (RNA) (By similarity).</text>
</comment>
<comment type="catalytic activity">
    <reaction evidence="1">
        <text>L-lysyl-[protein] + 2-oxoglutarate + O2 = (3S)-3-hydroxy-L-lysyl-[protein] + succinate + CO2</text>
        <dbReference type="Rhea" id="RHEA:57152"/>
        <dbReference type="Rhea" id="RHEA-COMP:9752"/>
        <dbReference type="Rhea" id="RHEA-COMP:15133"/>
        <dbReference type="ChEBI" id="CHEBI:15379"/>
        <dbReference type="ChEBI" id="CHEBI:16526"/>
        <dbReference type="ChEBI" id="CHEBI:16810"/>
        <dbReference type="ChEBI" id="CHEBI:29969"/>
        <dbReference type="ChEBI" id="CHEBI:30031"/>
        <dbReference type="ChEBI" id="CHEBI:141492"/>
        <dbReference type="EC" id="1.14.11.63"/>
    </reaction>
</comment>
<comment type="cofactor">
    <cofactor evidence="1">
        <name>Fe(2+)</name>
        <dbReference type="ChEBI" id="CHEBI:29033"/>
    </cofactor>
</comment>
<comment type="subunit">
    <text evidence="1">Homodimer; disulfide-linked. Interacts with DRG1 and DRG2.</text>
</comment>
<comment type="subcellular location">
    <subcellularLocation>
        <location evidence="1">Nucleus</location>
    </subcellularLocation>
    <subcellularLocation>
        <location evidence="1">Cytoplasm</location>
    </subcellularLocation>
</comment>
<comment type="caution">
    <text evidence="5">This sequence was first thought to be an alternatively spliced isoform of Pla2g4b. It is derived from Jmjd7 which is located upstream of Pla2g4b. Most tissues also express read-through transcripts from Jmjd7 into the downstream Pla2g4b gene, some of which may encode fusion proteins combining the N-terminus of this protein with PLA2G4B protein.</text>
</comment>
<accession>P0C872</accession>
<accession>A2AP62</accession>
<accession>Q4QQM1</accession>
<accession>Q80VV8</accession>
<accession>Q91W88</accession>
<reference key="1">
    <citation type="journal article" date="2004" name="Genome Res.">
        <title>The status, quality, and expansion of the NIH full-length cDNA project: the Mammalian Gene Collection (MGC).</title>
        <authorList>
            <consortium name="The MGC Project Team"/>
        </authorList>
    </citation>
    <scope>NUCLEOTIDE SEQUENCE [LARGE SCALE MRNA]</scope>
    <source>
        <strain>FVB/N</strain>
        <tissue>Salivary gland</tissue>
    </source>
</reference>
<reference key="2">
    <citation type="journal article" date="2010" name="Cell">
        <title>A tissue-specific atlas of mouse protein phosphorylation and expression.</title>
        <authorList>
            <person name="Huttlin E.L."/>
            <person name="Jedrychowski M.P."/>
            <person name="Elias J.E."/>
            <person name="Goswami T."/>
            <person name="Rad R."/>
            <person name="Beausoleil S.A."/>
            <person name="Villen J."/>
            <person name="Haas W."/>
            <person name="Sowa M.E."/>
            <person name="Gygi S.P."/>
        </authorList>
    </citation>
    <scope>IDENTIFICATION BY MASS SPECTROMETRY [LARGE SCALE ANALYSIS]</scope>
    <source>
        <tissue>Testis</tissue>
    </source>
</reference>
<reference key="3">
    <citation type="journal article" date="2017" name="Proc. Natl. Acad. Sci. U.S.A.">
        <title>Clipping of arginine-methylated histone tails by JMJD5 and JMJD7.</title>
        <authorList>
            <person name="Liu H."/>
            <person name="Wang C."/>
            <person name="Lee S."/>
            <person name="Deng Y."/>
            <person name="Wither M."/>
            <person name="Oh S."/>
            <person name="Ning F."/>
            <person name="Dege C."/>
            <person name="Zhang Q."/>
            <person name="Liu X."/>
            <person name="Johnson A.M."/>
            <person name="Zang J."/>
            <person name="Chen Z."/>
            <person name="Janknecht R."/>
            <person name="Hansen K."/>
            <person name="Marrack P."/>
            <person name="Li C.Y."/>
            <person name="Kappler J.W."/>
            <person name="Hagman J."/>
            <person name="Zhang G."/>
        </authorList>
    </citation>
    <scope>FUNCTION</scope>
</reference>
<evidence type="ECO:0000250" key="1">
    <source>
        <dbReference type="UniProtKB" id="P0C870"/>
    </source>
</evidence>
<evidence type="ECO:0000255" key="2">
    <source>
        <dbReference type="PROSITE-ProRule" id="PRU00538"/>
    </source>
</evidence>
<evidence type="ECO:0000269" key="3">
    <source>
    </source>
</evidence>
<evidence type="ECO:0000303" key="4">
    <source>
    </source>
</evidence>
<evidence type="ECO:0000305" key="5"/>
<evidence type="ECO:0000312" key="6">
    <source>
        <dbReference type="MGI" id="MGI:3845785"/>
    </source>
</evidence>
<evidence type="ECO:0007829" key="7">
    <source>
        <dbReference type="PDB" id="4QU2"/>
    </source>
</evidence>
<protein>
    <recommendedName>
        <fullName evidence="1">Bifunctional peptidase and (3S)-lysyl hydroxylase Jmjd7</fullName>
        <ecNumber evidence="1">1.14.11.63</ecNumber>
        <ecNumber evidence="3">3.4.-.-</ecNumber>
    </recommendedName>
    <alternativeName>
        <fullName evidence="1">JmjC domain-containing protein 7</fullName>
    </alternativeName>
    <alternativeName>
        <fullName evidence="1">Jumonji domain-containing protein 7</fullName>
    </alternativeName>
    <alternativeName>
        <fullName evidence="1">L-lysine (3S)-hydroxylase Jmjd7</fullName>
    </alternativeName>
</protein>
<dbReference type="EC" id="1.14.11.63" evidence="1"/>
<dbReference type="EC" id="3.4.-.-" evidence="3"/>
<dbReference type="EMBL" id="BC016255">
    <property type="protein sequence ID" value="AAH16255.1"/>
    <property type="molecule type" value="mRNA"/>
</dbReference>
<dbReference type="CCDS" id="CCDS50676.1"/>
<dbReference type="RefSeq" id="NP_001108109.1">
    <property type="nucleotide sequence ID" value="NM_001114637.1"/>
</dbReference>
<dbReference type="PDB" id="4QSZ">
    <property type="method" value="X-ray"/>
    <property type="resolution" value="2.86 A"/>
    <property type="chains" value="A/B=2-312"/>
</dbReference>
<dbReference type="PDB" id="4QU2">
    <property type="method" value="X-ray"/>
    <property type="resolution" value="2.70 A"/>
    <property type="chains" value="A/B=1-316"/>
</dbReference>
<dbReference type="PDBsum" id="4QSZ"/>
<dbReference type="PDBsum" id="4QU2"/>
<dbReference type="SMR" id="P0C872"/>
<dbReference type="FunCoup" id="P0C872">
    <property type="interactions" value="2668"/>
</dbReference>
<dbReference type="STRING" id="10090.ENSMUSP00000041220"/>
<dbReference type="PhosphoSitePlus" id="P0C872"/>
<dbReference type="PaxDb" id="10090-ENSMUSP00000041220"/>
<dbReference type="ProteomicsDB" id="301698"/>
<dbReference type="Antibodypedia" id="35028">
    <property type="antibodies" value="94 antibodies from 27 providers"/>
</dbReference>
<dbReference type="Ensembl" id="ENSMUST00000044675.5">
    <property type="protein sequence ID" value="ENSMUSP00000041220.5"/>
    <property type="gene ID" value="ENSMUSG00000098789.8"/>
</dbReference>
<dbReference type="GeneID" id="433466"/>
<dbReference type="KEGG" id="mmu:433466"/>
<dbReference type="UCSC" id="uc008luy.2">
    <property type="organism name" value="mouse"/>
</dbReference>
<dbReference type="AGR" id="MGI:3845785"/>
<dbReference type="CTD" id="100137047"/>
<dbReference type="MGI" id="MGI:3845785">
    <property type="gene designation" value="Jmjd7"/>
</dbReference>
<dbReference type="VEuPathDB" id="HostDB:ENSMUSG00000098789"/>
<dbReference type="eggNOG" id="KOG2508">
    <property type="taxonomic scope" value="Eukaryota"/>
</dbReference>
<dbReference type="GeneTree" id="ENSGT00900000141196"/>
<dbReference type="HOGENOM" id="CLU_016785_6_0_1"/>
<dbReference type="InParanoid" id="P0C872"/>
<dbReference type="OMA" id="YWHDMEF"/>
<dbReference type="OrthoDB" id="415358at2759"/>
<dbReference type="PhylomeDB" id="P0C872"/>
<dbReference type="BRENDA" id="1.14.11.63">
    <property type="organism ID" value="3474"/>
</dbReference>
<dbReference type="Reactome" id="R-MMU-9629569">
    <property type="pathway name" value="Protein hydroxylation"/>
</dbReference>
<dbReference type="BioGRID-ORCS" id="433466">
    <property type="hits" value="1 hit in 76 CRISPR screens"/>
</dbReference>
<dbReference type="EvolutionaryTrace" id="P0C872"/>
<dbReference type="PRO" id="PR:P0C872"/>
<dbReference type="Proteomes" id="UP000000589">
    <property type="component" value="Chromosome 2"/>
</dbReference>
<dbReference type="RNAct" id="P0C872">
    <property type="molecule type" value="protein"/>
</dbReference>
<dbReference type="Bgee" id="ENSMUSG00000098789">
    <property type="expression patterns" value="Expressed in lens of camera-type eye and 73 other cell types or tissues"/>
</dbReference>
<dbReference type="ExpressionAtlas" id="P0C872">
    <property type="expression patterns" value="baseline and differential"/>
</dbReference>
<dbReference type="GO" id="GO:0005737">
    <property type="term" value="C:cytoplasm"/>
    <property type="evidence" value="ECO:0007669"/>
    <property type="project" value="UniProtKB-SubCell"/>
</dbReference>
<dbReference type="GO" id="GO:0005634">
    <property type="term" value="C:nucleus"/>
    <property type="evidence" value="ECO:0007669"/>
    <property type="project" value="UniProtKB-SubCell"/>
</dbReference>
<dbReference type="GO" id="GO:0004177">
    <property type="term" value="F:aminopeptidase activity"/>
    <property type="evidence" value="ECO:0007669"/>
    <property type="project" value="UniProtKB-KW"/>
</dbReference>
<dbReference type="GO" id="GO:0004175">
    <property type="term" value="F:endopeptidase activity"/>
    <property type="evidence" value="ECO:0007669"/>
    <property type="project" value="Ensembl"/>
</dbReference>
<dbReference type="GO" id="GO:0046872">
    <property type="term" value="F:metal ion binding"/>
    <property type="evidence" value="ECO:0007669"/>
    <property type="project" value="UniProtKB-KW"/>
</dbReference>
<dbReference type="GO" id="GO:0035064">
    <property type="term" value="F:methylated histone binding"/>
    <property type="evidence" value="ECO:0007669"/>
    <property type="project" value="Ensembl"/>
</dbReference>
<dbReference type="GO" id="GO:0004497">
    <property type="term" value="F:monooxygenase activity"/>
    <property type="evidence" value="ECO:0007669"/>
    <property type="project" value="UniProtKB-KW"/>
</dbReference>
<dbReference type="GO" id="GO:0106155">
    <property type="term" value="F:peptidyl-lysine 3-dioxygenase activity"/>
    <property type="evidence" value="ECO:0007669"/>
    <property type="project" value="UniProtKB-EC"/>
</dbReference>
<dbReference type="GO" id="GO:0006508">
    <property type="term" value="P:proteolysis"/>
    <property type="evidence" value="ECO:0007669"/>
    <property type="project" value="UniProtKB-KW"/>
</dbReference>
<dbReference type="FunFam" id="2.60.120.10:FF:000059">
    <property type="entry name" value="jmjC domain-containing protein 7"/>
    <property type="match status" value="1"/>
</dbReference>
<dbReference type="Gene3D" id="2.60.120.10">
    <property type="entry name" value="Jelly Rolls"/>
    <property type="match status" value="1"/>
</dbReference>
<dbReference type="InterPro" id="IPR041667">
    <property type="entry name" value="Cupin_8"/>
</dbReference>
<dbReference type="InterPro" id="IPR003347">
    <property type="entry name" value="JmjC_dom"/>
</dbReference>
<dbReference type="InterPro" id="IPR014710">
    <property type="entry name" value="RmlC-like_jellyroll"/>
</dbReference>
<dbReference type="PANTHER" id="PTHR12461:SF99">
    <property type="entry name" value="BIFUNCTIONAL PEPTIDASE AND (3S)-LYSYL HYDROXYLASE JMJD7"/>
    <property type="match status" value="1"/>
</dbReference>
<dbReference type="PANTHER" id="PTHR12461">
    <property type="entry name" value="HYPOXIA-INDUCIBLE FACTOR 1 ALPHA INHIBITOR-RELATED"/>
    <property type="match status" value="1"/>
</dbReference>
<dbReference type="Pfam" id="PF13621">
    <property type="entry name" value="Cupin_8"/>
    <property type="match status" value="1"/>
</dbReference>
<dbReference type="SMART" id="SM00558">
    <property type="entry name" value="JmjC"/>
    <property type="match status" value="1"/>
</dbReference>
<dbReference type="SUPFAM" id="SSF51197">
    <property type="entry name" value="Clavaminate synthase-like"/>
    <property type="match status" value="1"/>
</dbReference>
<dbReference type="PROSITE" id="PS51184">
    <property type="entry name" value="JMJC"/>
    <property type="match status" value="1"/>
</dbReference>
<proteinExistence type="evidence at protein level"/>